<feature type="chain" id="PRO_0000173983" description="Protein UmuC">
    <location>
        <begin position="1"/>
        <end position="422"/>
    </location>
</feature>
<feature type="domain" description="UmuC" evidence="1">
    <location>
        <begin position="2"/>
        <end position="188"/>
    </location>
</feature>
<name>UMUC_SALTY</name>
<organism>
    <name type="scientific">Salmonella typhimurium (strain LT2 / SGSC1412 / ATCC 700720)</name>
    <dbReference type="NCBI Taxonomy" id="99287"/>
    <lineage>
        <taxon>Bacteria</taxon>
        <taxon>Pseudomonadati</taxon>
        <taxon>Pseudomonadota</taxon>
        <taxon>Gammaproteobacteria</taxon>
        <taxon>Enterobacterales</taxon>
        <taxon>Enterobacteriaceae</taxon>
        <taxon>Salmonella</taxon>
    </lineage>
</organism>
<gene>
    <name type="primary">umuC</name>
    <name type="ordered locus">STM1997</name>
</gene>
<keyword id="KW-0227">DNA damage</keyword>
<keyword id="KW-0234">DNA repair</keyword>
<keyword id="KW-1185">Reference proteome</keyword>
<keyword id="KW-0741">SOS mutagenesis</keyword>
<keyword id="KW-0742">SOS response</keyword>
<dbReference type="EMBL" id="M57431">
    <property type="protein sequence ID" value="AAA27248.1"/>
    <property type="molecule type" value="Genomic_DNA"/>
</dbReference>
<dbReference type="EMBL" id="AE006468">
    <property type="protein sequence ID" value="AAL20907.1"/>
    <property type="molecule type" value="Genomic_DNA"/>
</dbReference>
<dbReference type="PIR" id="B36713">
    <property type="entry name" value="B36713"/>
</dbReference>
<dbReference type="RefSeq" id="NP_460948.1">
    <property type="nucleotide sequence ID" value="NC_003197.2"/>
</dbReference>
<dbReference type="RefSeq" id="WP_000457662.1">
    <property type="nucleotide sequence ID" value="NC_003197.2"/>
</dbReference>
<dbReference type="SMR" id="P22494"/>
<dbReference type="STRING" id="99287.STM1997"/>
<dbReference type="PaxDb" id="99287-STM1997"/>
<dbReference type="GeneID" id="1253518"/>
<dbReference type="KEGG" id="stm:STM1997"/>
<dbReference type="PATRIC" id="fig|99287.12.peg.2115"/>
<dbReference type="HOGENOM" id="CLU_012348_3_0_6"/>
<dbReference type="OMA" id="PHMNLYI"/>
<dbReference type="PhylomeDB" id="P22494"/>
<dbReference type="BioCyc" id="SENT99287:STM1997-MONOMER"/>
<dbReference type="Proteomes" id="UP000001014">
    <property type="component" value="Chromosome"/>
</dbReference>
<dbReference type="GO" id="GO:0003684">
    <property type="term" value="F:damaged DNA binding"/>
    <property type="evidence" value="ECO:0007669"/>
    <property type="project" value="InterPro"/>
</dbReference>
<dbReference type="GO" id="GO:0003887">
    <property type="term" value="F:DNA-directed DNA polymerase activity"/>
    <property type="evidence" value="ECO:0000318"/>
    <property type="project" value="GO_Central"/>
</dbReference>
<dbReference type="GO" id="GO:0042276">
    <property type="term" value="P:error-prone translesion synthesis"/>
    <property type="evidence" value="ECO:0000318"/>
    <property type="project" value="GO_Central"/>
</dbReference>
<dbReference type="GO" id="GO:0009432">
    <property type="term" value="P:SOS response"/>
    <property type="evidence" value="ECO:0000318"/>
    <property type="project" value="GO_Central"/>
</dbReference>
<dbReference type="CDD" id="cd01700">
    <property type="entry name" value="PolY_Pol_V_umuC"/>
    <property type="match status" value="1"/>
</dbReference>
<dbReference type="FunFam" id="3.30.70.270:FF:000012">
    <property type="entry name" value="DNA polymerase V subunit"/>
    <property type="match status" value="1"/>
</dbReference>
<dbReference type="Gene3D" id="3.30.70.270">
    <property type="match status" value="1"/>
</dbReference>
<dbReference type="Gene3D" id="3.40.1170.60">
    <property type="match status" value="1"/>
</dbReference>
<dbReference type="Gene3D" id="1.10.150.20">
    <property type="entry name" value="5' to 3' exonuclease, C-terminal subdomain"/>
    <property type="match status" value="1"/>
</dbReference>
<dbReference type="Gene3D" id="3.30.1490.100">
    <property type="entry name" value="DNA polymerase, Y-family, little finger domain"/>
    <property type="match status" value="1"/>
</dbReference>
<dbReference type="InterPro" id="IPR043502">
    <property type="entry name" value="DNA/RNA_pol_sf"/>
</dbReference>
<dbReference type="InterPro" id="IPR036775">
    <property type="entry name" value="DNA_pol_Y-fam_lit_finger_sf"/>
</dbReference>
<dbReference type="InterPro" id="IPR017961">
    <property type="entry name" value="DNA_pol_Y-fam_little_finger"/>
</dbReference>
<dbReference type="InterPro" id="IPR050116">
    <property type="entry name" value="DNA_polymerase-Y"/>
</dbReference>
<dbReference type="InterPro" id="IPR025188">
    <property type="entry name" value="DUF4113"/>
</dbReference>
<dbReference type="InterPro" id="IPR024728">
    <property type="entry name" value="PolY_HhH_motif"/>
</dbReference>
<dbReference type="InterPro" id="IPR043128">
    <property type="entry name" value="Rev_trsase/Diguanyl_cyclase"/>
</dbReference>
<dbReference type="InterPro" id="IPR001126">
    <property type="entry name" value="UmuC"/>
</dbReference>
<dbReference type="NCBIfam" id="NF002955">
    <property type="entry name" value="PRK03609.1"/>
    <property type="match status" value="1"/>
</dbReference>
<dbReference type="PANTHER" id="PTHR11076">
    <property type="entry name" value="DNA REPAIR POLYMERASE UMUC / TRANSFERASE FAMILY MEMBER"/>
    <property type="match status" value="1"/>
</dbReference>
<dbReference type="PANTHER" id="PTHR11076:SF34">
    <property type="entry name" value="PROTEIN UMUC"/>
    <property type="match status" value="1"/>
</dbReference>
<dbReference type="Pfam" id="PF13438">
    <property type="entry name" value="DUF4113"/>
    <property type="match status" value="1"/>
</dbReference>
<dbReference type="Pfam" id="PF00817">
    <property type="entry name" value="IMS"/>
    <property type="match status" value="1"/>
</dbReference>
<dbReference type="Pfam" id="PF11799">
    <property type="entry name" value="IMS_C"/>
    <property type="match status" value="1"/>
</dbReference>
<dbReference type="Pfam" id="PF11798">
    <property type="entry name" value="IMS_HHH"/>
    <property type="match status" value="1"/>
</dbReference>
<dbReference type="SUPFAM" id="SSF56672">
    <property type="entry name" value="DNA/RNA polymerases"/>
    <property type="match status" value="1"/>
</dbReference>
<dbReference type="SUPFAM" id="SSF100879">
    <property type="entry name" value="Lesion bypass DNA polymerase (Y-family), little finger domain"/>
    <property type="match status" value="1"/>
</dbReference>
<dbReference type="PROSITE" id="PS50173">
    <property type="entry name" value="UMUC"/>
    <property type="match status" value="1"/>
</dbReference>
<protein>
    <recommendedName>
        <fullName>Protein UmuC</fullName>
    </recommendedName>
</protein>
<evidence type="ECO:0000255" key="1">
    <source>
        <dbReference type="PROSITE-ProRule" id="PRU00216"/>
    </source>
</evidence>
<evidence type="ECO:0000305" key="2"/>
<accession>P22494</accession>
<sequence>MFALCDVNSFYASCETVFRPDLCGRPVVVLSNNDGCVIACSAEAKQLGIAPGEPYFKQKERFRRSGVVCFSSNYELYADMSNRVMTTLEEMVPRVEIYSIDEAFCDLTGVRNCRDLTDFGREIRATVLKRTHLTVGVGIAQTKTLAKLANHAAKKWQRQTDGVVDLSNIDRQRRLLALIPVEDVWGVGRRISKKLNALGIKTALDLSEQSTWIIRKHFNVVLERTVRELRGEPCLELEEFAPAKQEIVCSRSFGERVTDYEEMRQAVYSYAARAAEKLRGEHQYCRFISTFVKTSPFALNEPYYGNSAAVTLLTPTQDSRDIINAAVKCLDKIWRDGHRYQKAGVMLGDFFSQGVAQLNLFDDNAPRAGSAKLMEVLDHLNAKDGKGTLYFAGQGMSQQWAMKREMLSPRYTTRYSDLLRVK</sequence>
<comment type="function">
    <text>Involved in UV protection and mutation. Essential for induced (or SOS) mutagenesis. May modify the DNA replication machinery to allow bypass synthesis across a damaged template.</text>
</comment>
<comment type="similarity">
    <text evidence="2">Belongs to the DNA polymerase type-Y family.</text>
</comment>
<proteinExistence type="inferred from homology"/>
<reference key="1">
    <citation type="journal article" date="1990" name="J. Bacteriol.">
        <title>Sequence analysis and mapping of the Salmonella typhimurium LT2 umuDC operon.</title>
        <authorList>
            <person name="Smith C.M."/>
            <person name="Koch W.H."/>
            <person name="Franklin S.B."/>
            <person name="Foster P.L."/>
            <person name="Cebula T.A."/>
            <person name="Eisenstadt E."/>
        </authorList>
    </citation>
    <scope>NUCLEOTIDE SEQUENCE [GENOMIC DNA]</scope>
    <source>
        <strain>LT2</strain>
    </source>
</reference>
<reference key="2">
    <citation type="journal article" date="1990" name="J. Bacteriol.">
        <title>Structural characterization of the Salmonella typhimurium LT2 umu operon.</title>
        <authorList>
            <person name="Thomas S.M."/>
            <person name="Crowne H.M."/>
            <person name="Pidsley S.C."/>
            <person name="Sedgwick S.G."/>
        </authorList>
    </citation>
    <scope>NUCLEOTIDE SEQUENCE [GENOMIC DNA]</scope>
    <source>
        <strain>LT2</strain>
    </source>
</reference>
<reference key="3">
    <citation type="journal article" date="2001" name="Nature">
        <title>Complete genome sequence of Salmonella enterica serovar Typhimurium LT2.</title>
        <authorList>
            <person name="McClelland M."/>
            <person name="Sanderson K.E."/>
            <person name="Spieth J."/>
            <person name="Clifton S.W."/>
            <person name="Latreille P."/>
            <person name="Courtney L."/>
            <person name="Porwollik S."/>
            <person name="Ali J."/>
            <person name="Dante M."/>
            <person name="Du F."/>
            <person name="Hou S."/>
            <person name="Layman D."/>
            <person name="Leonard S."/>
            <person name="Nguyen C."/>
            <person name="Scott K."/>
            <person name="Holmes A."/>
            <person name="Grewal N."/>
            <person name="Mulvaney E."/>
            <person name="Ryan E."/>
            <person name="Sun H."/>
            <person name="Florea L."/>
            <person name="Miller W."/>
            <person name="Stoneking T."/>
            <person name="Nhan M."/>
            <person name="Waterston R."/>
            <person name="Wilson R.K."/>
        </authorList>
    </citation>
    <scope>NUCLEOTIDE SEQUENCE [LARGE SCALE GENOMIC DNA]</scope>
    <source>
        <strain>LT2 / SGSC1412 / ATCC 700720</strain>
    </source>
</reference>